<accession>B7LSI1</accession>
<gene>
    <name evidence="1" type="primary">lolB</name>
    <name type="ordered locus">EFER_1752</name>
</gene>
<evidence type="ECO:0000255" key="1">
    <source>
        <dbReference type="HAMAP-Rule" id="MF_00233"/>
    </source>
</evidence>
<comment type="function">
    <text evidence="1">Plays a critical role in the incorporation of lipoproteins in the outer membrane after they are released by the LolA protein.</text>
</comment>
<comment type="subunit">
    <text evidence="1">Monomer.</text>
</comment>
<comment type="subcellular location">
    <subcellularLocation>
        <location evidence="1">Cell outer membrane</location>
        <topology evidence="1">Lipid-anchor</topology>
    </subcellularLocation>
</comment>
<comment type="similarity">
    <text evidence="1">Belongs to the LolB family.</text>
</comment>
<feature type="signal peptide" evidence="1">
    <location>
        <begin position="1"/>
        <end position="21"/>
    </location>
</feature>
<feature type="chain" id="PRO_1000118978" description="Outer-membrane lipoprotein LolB">
    <location>
        <begin position="22"/>
        <end position="207"/>
    </location>
</feature>
<feature type="lipid moiety-binding region" description="N-palmitoyl cysteine" evidence="1">
    <location>
        <position position="22"/>
    </location>
</feature>
<feature type="lipid moiety-binding region" description="S-diacylglycerol cysteine" evidence="1">
    <location>
        <position position="22"/>
    </location>
</feature>
<name>LOLB_ESCF3</name>
<keyword id="KW-0998">Cell outer membrane</keyword>
<keyword id="KW-0143">Chaperone</keyword>
<keyword id="KW-0449">Lipoprotein</keyword>
<keyword id="KW-0472">Membrane</keyword>
<keyword id="KW-0564">Palmitate</keyword>
<keyword id="KW-0653">Protein transport</keyword>
<keyword id="KW-0732">Signal</keyword>
<keyword id="KW-0813">Transport</keyword>
<dbReference type="EMBL" id="CU928158">
    <property type="protein sequence ID" value="CAQ89267.1"/>
    <property type="molecule type" value="Genomic_DNA"/>
</dbReference>
<dbReference type="RefSeq" id="WP_001130705.1">
    <property type="nucleotide sequence ID" value="NC_011740.1"/>
</dbReference>
<dbReference type="SMR" id="B7LSI1"/>
<dbReference type="GeneID" id="75057211"/>
<dbReference type="KEGG" id="efe:EFER_1752"/>
<dbReference type="HOGENOM" id="CLU_092816_1_1_6"/>
<dbReference type="OrthoDB" id="9797618at2"/>
<dbReference type="Proteomes" id="UP000000745">
    <property type="component" value="Chromosome"/>
</dbReference>
<dbReference type="GO" id="GO:0009279">
    <property type="term" value="C:cell outer membrane"/>
    <property type="evidence" value="ECO:0007669"/>
    <property type="project" value="UniProtKB-SubCell"/>
</dbReference>
<dbReference type="GO" id="GO:0044874">
    <property type="term" value="P:lipoprotein localization to outer membrane"/>
    <property type="evidence" value="ECO:0007669"/>
    <property type="project" value="UniProtKB-UniRule"/>
</dbReference>
<dbReference type="GO" id="GO:0015031">
    <property type="term" value="P:protein transport"/>
    <property type="evidence" value="ECO:0007669"/>
    <property type="project" value="UniProtKB-KW"/>
</dbReference>
<dbReference type="CDD" id="cd16326">
    <property type="entry name" value="LolB"/>
    <property type="match status" value="1"/>
</dbReference>
<dbReference type="FunFam" id="2.50.20.10:FF:000002">
    <property type="entry name" value="Outer-membrane lipoprotein LolB"/>
    <property type="match status" value="1"/>
</dbReference>
<dbReference type="Gene3D" id="2.50.20.10">
    <property type="entry name" value="Lipoprotein localisation LolA/LolB/LppX"/>
    <property type="match status" value="1"/>
</dbReference>
<dbReference type="HAMAP" id="MF_00233">
    <property type="entry name" value="LolB"/>
    <property type="match status" value="1"/>
</dbReference>
<dbReference type="InterPro" id="IPR029046">
    <property type="entry name" value="LolA/LolB/LppX"/>
</dbReference>
<dbReference type="InterPro" id="IPR004565">
    <property type="entry name" value="OM_lipoprot_LolB"/>
</dbReference>
<dbReference type="NCBIfam" id="TIGR00548">
    <property type="entry name" value="lolB"/>
    <property type="match status" value="1"/>
</dbReference>
<dbReference type="Pfam" id="PF03550">
    <property type="entry name" value="LolB"/>
    <property type="match status" value="1"/>
</dbReference>
<dbReference type="SUPFAM" id="SSF89392">
    <property type="entry name" value="Prokaryotic lipoproteins and lipoprotein localization factors"/>
    <property type="match status" value="1"/>
</dbReference>
<dbReference type="PROSITE" id="PS51257">
    <property type="entry name" value="PROKAR_LIPOPROTEIN"/>
    <property type="match status" value="1"/>
</dbReference>
<sequence length="207" mass="23595">MPLPDFRLIRLLPLASLVLTACTITSPKGPGKSPDSPQWRQHQQDVRNLNQYQTRGAFAYISDQQKVYARFFWQQTGQDRYRLLLTNPLGSTELELNAQPGNVQLVDNKGQRYTADDAEEMIGKLTGMPIPLNSLRQWILGLPGDATDYKLDDQYRLSEITYSQNGKNWKVVYGGYDTKTQPAMPANMELTEGGQRIKLKMDNWIVK</sequence>
<proteinExistence type="inferred from homology"/>
<reference key="1">
    <citation type="journal article" date="2009" name="PLoS Genet.">
        <title>Organised genome dynamics in the Escherichia coli species results in highly diverse adaptive paths.</title>
        <authorList>
            <person name="Touchon M."/>
            <person name="Hoede C."/>
            <person name="Tenaillon O."/>
            <person name="Barbe V."/>
            <person name="Baeriswyl S."/>
            <person name="Bidet P."/>
            <person name="Bingen E."/>
            <person name="Bonacorsi S."/>
            <person name="Bouchier C."/>
            <person name="Bouvet O."/>
            <person name="Calteau A."/>
            <person name="Chiapello H."/>
            <person name="Clermont O."/>
            <person name="Cruveiller S."/>
            <person name="Danchin A."/>
            <person name="Diard M."/>
            <person name="Dossat C."/>
            <person name="Karoui M.E."/>
            <person name="Frapy E."/>
            <person name="Garry L."/>
            <person name="Ghigo J.M."/>
            <person name="Gilles A.M."/>
            <person name="Johnson J."/>
            <person name="Le Bouguenec C."/>
            <person name="Lescat M."/>
            <person name="Mangenot S."/>
            <person name="Martinez-Jehanne V."/>
            <person name="Matic I."/>
            <person name="Nassif X."/>
            <person name="Oztas S."/>
            <person name="Petit M.A."/>
            <person name="Pichon C."/>
            <person name="Rouy Z."/>
            <person name="Ruf C.S."/>
            <person name="Schneider D."/>
            <person name="Tourret J."/>
            <person name="Vacherie B."/>
            <person name="Vallenet D."/>
            <person name="Medigue C."/>
            <person name="Rocha E.P.C."/>
            <person name="Denamur E."/>
        </authorList>
    </citation>
    <scope>NUCLEOTIDE SEQUENCE [LARGE SCALE GENOMIC DNA]</scope>
    <source>
        <strain>ATCC 35469 / DSM 13698 / BCRC 15582 / CCUG 18766 / IAM 14443 / JCM 21226 / LMG 7866 / NBRC 102419 / NCTC 12128 / CDC 0568-73</strain>
    </source>
</reference>
<protein>
    <recommendedName>
        <fullName evidence="1">Outer-membrane lipoprotein LolB</fullName>
    </recommendedName>
</protein>
<organism>
    <name type="scientific">Escherichia fergusonii (strain ATCC 35469 / DSM 13698 / CCUG 18766 / IAM 14443 / JCM 21226 / LMG 7866 / NBRC 102419 / NCTC 12128 / CDC 0568-73)</name>
    <dbReference type="NCBI Taxonomy" id="585054"/>
    <lineage>
        <taxon>Bacteria</taxon>
        <taxon>Pseudomonadati</taxon>
        <taxon>Pseudomonadota</taxon>
        <taxon>Gammaproteobacteria</taxon>
        <taxon>Enterobacterales</taxon>
        <taxon>Enterobacteriaceae</taxon>
        <taxon>Escherichia</taxon>
    </lineage>
</organism>